<name>Y1979_MYCTU</name>
<comment type="function">
    <text evidence="1">Probable amino-acid or metabolite transport protein.</text>
</comment>
<comment type="subcellular location">
    <subcellularLocation>
        <location evidence="3">Cell membrane</location>
        <topology evidence="3">Multi-pass membrane protein</topology>
    </subcellularLocation>
</comment>
<comment type="similarity">
    <text evidence="3">Belongs to the amino acid-polyamine-organocation (APC) superfamily.</text>
</comment>
<protein>
    <recommendedName>
        <fullName>Uncharacterized transporter Rv1979c</fullName>
    </recommendedName>
</protein>
<feature type="chain" id="PRO_0000054225" description="Uncharacterized transporter Rv1979c">
    <location>
        <begin position="1"/>
        <end position="481"/>
    </location>
</feature>
<feature type="transmembrane region" description="Helical" evidence="2">
    <location>
        <begin position="14"/>
        <end position="34"/>
    </location>
</feature>
<feature type="transmembrane region" description="Helical" evidence="2">
    <location>
        <begin position="46"/>
        <end position="66"/>
    </location>
</feature>
<feature type="transmembrane region" description="Helical" evidence="2">
    <location>
        <begin position="90"/>
        <end position="110"/>
    </location>
</feature>
<feature type="transmembrane region" description="Helical" evidence="2">
    <location>
        <begin position="134"/>
        <end position="154"/>
    </location>
</feature>
<feature type="transmembrane region" description="Helical" evidence="2">
    <location>
        <begin position="167"/>
        <end position="187"/>
    </location>
</feature>
<feature type="transmembrane region" description="Helical" evidence="2">
    <location>
        <begin position="218"/>
        <end position="238"/>
    </location>
</feature>
<feature type="transmembrane region" description="Helical" evidence="2">
    <location>
        <begin position="258"/>
        <end position="278"/>
    </location>
</feature>
<feature type="transmembrane region" description="Helical" evidence="2">
    <location>
        <begin position="303"/>
        <end position="323"/>
    </location>
</feature>
<feature type="transmembrane region" description="Helical" evidence="2">
    <location>
        <begin position="377"/>
        <end position="397"/>
    </location>
</feature>
<feature type="transmembrane region" description="Helical" evidence="2">
    <location>
        <begin position="411"/>
        <end position="431"/>
    </location>
</feature>
<feature type="transmembrane region" description="Helical" evidence="2">
    <location>
        <begin position="446"/>
        <end position="466"/>
    </location>
</feature>
<organism>
    <name type="scientific">Mycobacterium tuberculosis (strain ATCC 25618 / H37Rv)</name>
    <dbReference type="NCBI Taxonomy" id="83332"/>
    <lineage>
        <taxon>Bacteria</taxon>
        <taxon>Bacillati</taxon>
        <taxon>Actinomycetota</taxon>
        <taxon>Actinomycetes</taxon>
        <taxon>Mycobacteriales</taxon>
        <taxon>Mycobacteriaceae</taxon>
        <taxon>Mycobacterium</taxon>
        <taxon>Mycobacterium tuberculosis complex</taxon>
    </lineage>
</organism>
<evidence type="ECO:0000250" key="1"/>
<evidence type="ECO:0000255" key="2"/>
<evidence type="ECO:0000305" key="3"/>
<proteinExistence type="evidence at protein level"/>
<sequence length="481" mass="51116">MVGPRTRGYAIHKLGFCSVVMLGINSIIGAGIFLTPGEVIGLAGPFAPMAYVLAGIFAGVVAIVFATAARYVRTNGASYAYTTAAFGRRIGIYVGVTHAITASIAWGVLASFFVSTLLRVAFPDKAWADAEQLFSVKTLTFLGFIGVLLAINLFGNRAIKWANGTSTVGKAFALSAFIVGGLWIITTQHVNNYATAWSAYSATPYSLLGVAEIGKGTFSSMALATIVALYAFTGFESIANAAEEMDAPDRNLPRAIPIAIFSVGAIYLLTLTVAMLLGSNKIAASDDTVKLAAAIGNATFRTIIVVGALISMFGINVAASFGAPRLWTALADSGVLPTRLSRKNQYDVPMVSFAITASLALAFPLALRFDNLHLTGLAVIARFVQFIIVPIALIALARSQAVEHAAVRRNAFTDKVLPLVAIVVSVGLAVSYDYRCIFLVRGGPNYFSIALIVITFIVVPAMAYLHYYRIIRRVGDRPSTR</sequence>
<dbReference type="EMBL" id="AL123456">
    <property type="protein sequence ID" value="CCP44748.1"/>
    <property type="molecule type" value="Genomic_DNA"/>
</dbReference>
<dbReference type="PIR" id="F70890">
    <property type="entry name" value="F70890"/>
</dbReference>
<dbReference type="RefSeq" id="NP_216495.2">
    <property type="nucleotide sequence ID" value="NC_000962.3"/>
</dbReference>
<dbReference type="RefSeq" id="WP_003899115.1">
    <property type="nucleotide sequence ID" value="NZ_NVQJ01000048.1"/>
</dbReference>
<dbReference type="SMR" id="P9WQM5"/>
<dbReference type="STRING" id="83332.Rv1979c"/>
<dbReference type="PaxDb" id="83332-Rv1979c"/>
<dbReference type="GeneID" id="885819"/>
<dbReference type="KEGG" id="mtu:Rv1979c"/>
<dbReference type="KEGG" id="mtv:RVBD_1979c"/>
<dbReference type="TubercuList" id="Rv1979c"/>
<dbReference type="eggNOG" id="COG0531">
    <property type="taxonomic scope" value="Bacteria"/>
</dbReference>
<dbReference type="InParanoid" id="P9WQM5"/>
<dbReference type="OrthoDB" id="4568421at2"/>
<dbReference type="Proteomes" id="UP000001584">
    <property type="component" value="Chromosome"/>
</dbReference>
<dbReference type="GO" id="GO:0005886">
    <property type="term" value="C:plasma membrane"/>
    <property type="evidence" value="ECO:0007669"/>
    <property type="project" value="UniProtKB-SubCell"/>
</dbReference>
<dbReference type="GO" id="GO:0022857">
    <property type="term" value="F:transmembrane transporter activity"/>
    <property type="evidence" value="ECO:0007669"/>
    <property type="project" value="InterPro"/>
</dbReference>
<dbReference type="Gene3D" id="1.20.1740.10">
    <property type="entry name" value="Amino acid/polyamine transporter I"/>
    <property type="match status" value="1"/>
</dbReference>
<dbReference type="InterPro" id="IPR002293">
    <property type="entry name" value="AA/rel_permease1"/>
</dbReference>
<dbReference type="InterPro" id="IPR050367">
    <property type="entry name" value="APC_superfamily"/>
</dbReference>
<dbReference type="PANTHER" id="PTHR42770">
    <property type="entry name" value="AMINO ACID TRANSPORTER-RELATED"/>
    <property type="match status" value="1"/>
</dbReference>
<dbReference type="PANTHER" id="PTHR42770:SF18">
    <property type="entry name" value="ARGININE_AGMATINE ANTIPORTER"/>
    <property type="match status" value="1"/>
</dbReference>
<dbReference type="Pfam" id="PF13520">
    <property type="entry name" value="AA_permease_2"/>
    <property type="match status" value="1"/>
</dbReference>
<dbReference type="PIRSF" id="PIRSF006060">
    <property type="entry name" value="AA_transporter"/>
    <property type="match status" value="1"/>
</dbReference>
<accession>P9WQM5</accession>
<accession>L0T8F5</accession>
<accession>O53980</accession>
<accession>Q10875</accession>
<reference key="1">
    <citation type="journal article" date="1998" name="Nature">
        <title>Deciphering the biology of Mycobacterium tuberculosis from the complete genome sequence.</title>
        <authorList>
            <person name="Cole S.T."/>
            <person name="Brosch R."/>
            <person name="Parkhill J."/>
            <person name="Garnier T."/>
            <person name="Churcher C.M."/>
            <person name="Harris D.E."/>
            <person name="Gordon S.V."/>
            <person name="Eiglmeier K."/>
            <person name="Gas S."/>
            <person name="Barry C.E. III"/>
            <person name="Tekaia F."/>
            <person name="Badcock K."/>
            <person name="Basham D."/>
            <person name="Brown D."/>
            <person name="Chillingworth T."/>
            <person name="Connor R."/>
            <person name="Davies R.M."/>
            <person name="Devlin K."/>
            <person name="Feltwell T."/>
            <person name="Gentles S."/>
            <person name="Hamlin N."/>
            <person name="Holroyd S."/>
            <person name="Hornsby T."/>
            <person name="Jagels K."/>
            <person name="Krogh A."/>
            <person name="McLean J."/>
            <person name="Moule S."/>
            <person name="Murphy L.D."/>
            <person name="Oliver S."/>
            <person name="Osborne J."/>
            <person name="Quail M.A."/>
            <person name="Rajandream M.A."/>
            <person name="Rogers J."/>
            <person name="Rutter S."/>
            <person name="Seeger K."/>
            <person name="Skelton S."/>
            <person name="Squares S."/>
            <person name="Squares R."/>
            <person name="Sulston J.E."/>
            <person name="Taylor K."/>
            <person name="Whitehead S."/>
            <person name="Barrell B.G."/>
        </authorList>
    </citation>
    <scope>NUCLEOTIDE SEQUENCE [LARGE SCALE GENOMIC DNA]</scope>
    <source>
        <strain>ATCC 25618 / H37Rv</strain>
    </source>
</reference>
<reference key="2">
    <citation type="journal article" date="2011" name="Mol. Cell. Proteomics">
        <title>Proteogenomic analysis of Mycobacterium tuberculosis by high resolution mass spectrometry.</title>
        <authorList>
            <person name="Kelkar D.S."/>
            <person name="Kumar D."/>
            <person name="Kumar P."/>
            <person name="Balakrishnan L."/>
            <person name="Muthusamy B."/>
            <person name="Yadav A.K."/>
            <person name="Shrivastava P."/>
            <person name="Marimuthu A."/>
            <person name="Anand S."/>
            <person name="Sundaram H."/>
            <person name="Kingsbury R."/>
            <person name="Harsha H.C."/>
            <person name="Nair B."/>
            <person name="Prasad T.S."/>
            <person name="Chauhan D.S."/>
            <person name="Katoch K."/>
            <person name="Katoch V.M."/>
            <person name="Kumar P."/>
            <person name="Chaerkady R."/>
            <person name="Ramachandran S."/>
            <person name="Dash D."/>
            <person name="Pandey A."/>
        </authorList>
    </citation>
    <scope>IDENTIFICATION BY MASS SPECTROMETRY [LARGE SCALE ANALYSIS]</scope>
    <source>
        <strain>ATCC 25618 / H37Rv</strain>
    </source>
</reference>
<gene>
    <name type="ordered locus">Rv1979c</name>
    <name type="ORF">MTCY39.40</name>
    <name type="ORF">MTV051.17c</name>
</gene>
<keyword id="KW-1003">Cell membrane</keyword>
<keyword id="KW-0472">Membrane</keyword>
<keyword id="KW-1185">Reference proteome</keyword>
<keyword id="KW-0812">Transmembrane</keyword>
<keyword id="KW-1133">Transmembrane helix</keyword>
<keyword id="KW-0813">Transport</keyword>